<gene>
    <name evidence="1" type="primary">smc</name>
    <name type="ordered locus">BURPS1710b_2592</name>
</gene>
<proteinExistence type="inferred from homology"/>
<comment type="function">
    <text evidence="1">Required for chromosome condensation and partitioning.</text>
</comment>
<comment type="subunit">
    <text evidence="1">Homodimer.</text>
</comment>
<comment type="subcellular location">
    <subcellularLocation>
        <location evidence="1">Cytoplasm</location>
    </subcellularLocation>
</comment>
<comment type="domain">
    <text evidence="1">Contains large globular domains required for ATP hydrolysis at each terminus and a third globular domain forming a flexible SMC hinge near the middle of the molecule. These domains are separated by coiled-coil structures.</text>
</comment>
<comment type="similarity">
    <text evidence="1">Belongs to the SMC family.</text>
</comment>
<comment type="sequence caution" evidence="2">
    <conflict type="erroneous initiation">
        <sequence resource="EMBL-CDS" id="ABA47647"/>
    </conflict>
    <text>Extended N-terminus.</text>
</comment>
<keyword id="KW-0067">ATP-binding</keyword>
<keyword id="KW-0175">Coiled coil</keyword>
<keyword id="KW-0963">Cytoplasm</keyword>
<keyword id="KW-0238">DNA-binding</keyword>
<keyword id="KW-0547">Nucleotide-binding</keyword>
<feature type="chain" id="PRO_0000409265" description="Chromosome partition protein Smc">
    <location>
        <begin position="1"/>
        <end position="1170"/>
    </location>
</feature>
<feature type="domain" description="SMC hinge">
    <location>
        <begin position="520"/>
        <end position="623"/>
    </location>
</feature>
<feature type="coiled-coil region" evidence="1">
    <location>
        <begin position="169"/>
        <end position="215"/>
    </location>
</feature>
<feature type="coiled-coil region" evidence="1">
    <location>
        <begin position="245"/>
        <end position="365"/>
    </location>
</feature>
<feature type="coiled-coil region" evidence="1">
    <location>
        <begin position="401"/>
        <end position="508"/>
    </location>
</feature>
<feature type="coiled-coil region" evidence="1">
    <location>
        <begin position="664"/>
        <end position="944"/>
    </location>
</feature>
<feature type="coiled-coil region" evidence="1">
    <location>
        <begin position="983"/>
        <end position="1020"/>
    </location>
</feature>
<feature type="binding site" evidence="1">
    <location>
        <begin position="32"/>
        <end position="39"/>
    </location>
    <ligand>
        <name>ATP</name>
        <dbReference type="ChEBI" id="CHEBI:30616"/>
    </ligand>
</feature>
<accession>Q3JR19</accession>
<protein>
    <recommendedName>
        <fullName evidence="1">Chromosome partition protein Smc</fullName>
    </recommendedName>
</protein>
<organism>
    <name type="scientific">Burkholderia pseudomallei (strain 1710b)</name>
    <dbReference type="NCBI Taxonomy" id="320372"/>
    <lineage>
        <taxon>Bacteria</taxon>
        <taxon>Pseudomonadati</taxon>
        <taxon>Pseudomonadota</taxon>
        <taxon>Betaproteobacteria</taxon>
        <taxon>Burkholderiales</taxon>
        <taxon>Burkholderiaceae</taxon>
        <taxon>Burkholderia</taxon>
        <taxon>pseudomallei group</taxon>
    </lineage>
</organism>
<evidence type="ECO:0000255" key="1">
    <source>
        <dbReference type="HAMAP-Rule" id="MF_01894"/>
    </source>
</evidence>
<evidence type="ECO:0000305" key="2"/>
<reference key="1">
    <citation type="journal article" date="2010" name="Genome Biol. Evol.">
        <title>Continuing evolution of Burkholderia mallei through genome reduction and large-scale rearrangements.</title>
        <authorList>
            <person name="Losada L."/>
            <person name="Ronning C.M."/>
            <person name="DeShazer D."/>
            <person name="Woods D."/>
            <person name="Fedorova N."/>
            <person name="Kim H.S."/>
            <person name="Shabalina S.A."/>
            <person name="Pearson T.R."/>
            <person name="Brinkac L."/>
            <person name="Tan P."/>
            <person name="Nandi T."/>
            <person name="Crabtree J."/>
            <person name="Badger J."/>
            <person name="Beckstrom-Sternberg S."/>
            <person name="Saqib M."/>
            <person name="Schutzer S.E."/>
            <person name="Keim P."/>
            <person name="Nierman W.C."/>
        </authorList>
    </citation>
    <scope>NUCLEOTIDE SEQUENCE [LARGE SCALE GENOMIC DNA]</scope>
    <source>
        <strain>1710b</strain>
    </source>
</reference>
<sequence length="1170" mass="129041">MRLSSIKLAGFKSFVDPTHFQVPGQLVGVVGPNGCGKSNIIDAVRWVLGESRASELRGESMQDVIFNGSTTRKPGSRASVELIFDNSDGRAAGQWGQYGEIAVKRVLTRDGTSSYYINNLPARRRDIQDIFLGTGLGPRAYAIIGQGMIARIIEAKPEELRVFLEEAAGVSKYKERRRETENRLHDTRENLTRVEDIVRELGANLEKLEAQAVVATKYKELVADGEEKQRLLWLLRKNEAAAEQDRQRRAIGDAQIELDAQTAKLREVEAQLETLRVAHYSASDAMQGAQGALYEANAEVSRLEAQIKFIVESRNRVQAQIAALVAQQEQWRAQADKAQGDLEVAEEARAVADEKAAIAEDDAAAKHDALPALEARWRDAQTGLNDERGRIAQTEQALKLEAAHQRNADQQLQQLQQRHERLKVEAGGLDAPDEAQLEELRMQLAEHEAMLAEAQARLADAQEALPRLDAQRRAAHERVQAESAQIHQLEARLAALKQLQENVQTQGKIQPWLDKHELGALPRLWKKLHVEAGWETALEAVLRERLAALEVSNLDWVKAFATDAPPAKLAFYAPPAAGEPLAAPGALRPLLPLVRIDDAGLRAVLNDWLGTVFVADDLAQALAARMQLPQGGAFVVKAGHVVTRSGVQLYAADSEQAGMLARAQEIENLTRQVRAQALLSDEAKAAAIRAEAAHTQASQALTEVRAQAERATQRVHALQMDVLKLTQAHERYTQRSTQIREELEEIGAQIEEQRALRAESEANFERHDAELAELQARFEDNQLAFESLDETLTNARQEARERERAATDARFAARQSANRIDELKRSIQVAHEQAERVAASLEDARAELETINEQTAHTGLQDALEVRAAKEQALGAARAELDDLTAKLRAADEARLAAERSLQPLRDRITELQLKEQAARMTGEQFAEQLATAEVDEAALKEKLMPDMKPSYLQGEVTRINNAINALGPVNMAALDELAAASERKVFLDAQSADLTNAIETLEDAIRKIDQETRALLQATFDEVNRHFSDLFPRLFGGGQAKLIMTGDEILDAGVQVMAQPPGKKNATIHLLSGGEKALTATALVFAMFQLNPAPFCLLDEVDAPLDDANTERFANLVRAMSDKTQFLFISHNKIAMEMAQQLIGVTMQEQGVSRIVAVDMETAAGFAQN</sequence>
<name>SMC_BURP1</name>
<dbReference type="EMBL" id="CP000124">
    <property type="protein sequence ID" value="ABA47647.1"/>
    <property type="status" value="ALT_INIT"/>
    <property type="molecule type" value="Genomic_DNA"/>
</dbReference>
<dbReference type="RefSeq" id="WP_004527298.1">
    <property type="nucleotide sequence ID" value="NC_007434.1"/>
</dbReference>
<dbReference type="SMR" id="Q3JR19"/>
<dbReference type="EnsemblBacteria" id="ABA47647">
    <property type="protein sequence ID" value="ABA47647"/>
    <property type="gene ID" value="BURPS1710b_2592"/>
</dbReference>
<dbReference type="GeneID" id="93060707"/>
<dbReference type="KEGG" id="bpm:BURPS1710b_2592"/>
<dbReference type="HOGENOM" id="CLU_001042_2_2_4"/>
<dbReference type="Proteomes" id="UP000002700">
    <property type="component" value="Chromosome I"/>
</dbReference>
<dbReference type="GO" id="GO:0005694">
    <property type="term" value="C:chromosome"/>
    <property type="evidence" value="ECO:0007669"/>
    <property type="project" value="InterPro"/>
</dbReference>
<dbReference type="GO" id="GO:0005737">
    <property type="term" value="C:cytoplasm"/>
    <property type="evidence" value="ECO:0007669"/>
    <property type="project" value="UniProtKB-SubCell"/>
</dbReference>
<dbReference type="GO" id="GO:0005524">
    <property type="term" value="F:ATP binding"/>
    <property type="evidence" value="ECO:0007669"/>
    <property type="project" value="UniProtKB-UniRule"/>
</dbReference>
<dbReference type="GO" id="GO:0016887">
    <property type="term" value="F:ATP hydrolysis activity"/>
    <property type="evidence" value="ECO:0007669"/>
    <property type="project" value="InterPro"/>
</dbReference>
<dbReference type="GO" id="GO:0003677">
    <property type="term" value="F:DNA binding"/>
    <property type="evidence" value="ECO:0007669"/>
    <property type="project" value="UniProtKB-UniRule"/>
</dbReference>
<dbReference type="GO" id="GO:0030261">
    <property type="term" value="P:chromosome condensation"/>
    <property type="evidence" value="ECO:0007669"/>
    <property type="project" value="InterPro"/>
</dbReference>
<dbReference type="GO" id="GO:0007059">
    <property type="term" value="P:chromosome segregation"/>
    <property type="evidence" value="ECO:0007669"/>
    <property type="project" value="UniProtKB-UniRule"/>
</dbReference>
<dbReference type="GO" id="GO:0006260">
    <property type="term" value="P:DNA replication"/>
    <property type="evidence" value="ECO:0007669"/>
    <property type="project" value="UniProtKB-UniRule"/>
</dbReference>
<dbReference type="GO" id="GO:0007062">
    <property type="term" value="P:sister chromatid cohesion"/>
    <property type="evidence" value="ECO:0007669"/>
    <property type="project" value="InterPro"/>
</dbReference>
<dbReference type="CDD" id="cd03278">
    <property type="entry name" value="ABC_SMC_barmotin"/>
    <property type="match status" value="2"/>
</dbReference>
<dbReference type="Gene3D" id="1.20.1060.20">
    <property type="match status" value="1"/>
</dbReference>
<dbReference type="Gene3D" id="3.30.70.1620">
    <property type="match status" value="1"/>
</dbReference>
<dbReference type="Gene3D" id="3.40.50.300">
    <property type="entry name" value="P-loop containing nucleotide triphosphate hydrolases"/>
    <property type="match status" value="2"/>
</dbReference>
<dbReference type="HAMAP" id="MF_01894">
    <property type="entry name" value="Smc_prok"/>
    <property type="match status" value="1"/>
</dbReference>
<dbReference type="InterPro" id="IPR027417">
    <property type="entry name" value="P-loop_NTPase"/>
</dbReference>
<dbReference type="InterPro" id="IPR003395">
    <property type="entry name" value="RecF/RecN/SMC_N"/>
</dbReference>
<dbReference type="InterPro" id="IPR024704">
    <property type="entry name" value="SMC"/>
</dbReference>
<dbReference type="InterPro" id="IPR010935">
    <property type="entry name" value="SMC_hinge"/>
</dbReference>
<dbReference type="InterPro" id="IPR036277">
    <property type="entry name" value="SMC_hinge_sf"/>
</dbReference>
<dbReference type="InterPro" id="IPR011890">
    <property type="entry name" value="SMC_prok"/>
</dbReference>
<dbReference type="NCBIfam" id="TIGR02168">
    <property type="entry name" value="SMC_prok_B"/>
    <property type="match status" value="1"/>
</dbReference>
<dbReference type="PANTHER" id="PTHR43977">
    <property type="entry name" value="STRUCTURAL MAINTENANCE OF CHROMOSOMES PROTEIN 3"/>
    <property type="match status" value="1"/>
</dbReference>
<dbReference type="Pfam" id="PF06470">
    <property type="entry name" value="SMC_hinge"/>
    <property type="match status" value="1"/>
</dbReference>
<dbReference type="Pfam" id="PF02463">
    <property type="entry name" value="SMC_N"/>
    <property type="match status" value="1"/>
</dbReference>
<dbReference type="PIRSF" id="PIRSF005719">
    <property type="entry name" value="SMC"/>
    <property type="match status" value="1"/>
</dbReference>
<dbReference type="SMART" id="SM00968">
    <property type="entry name" value="SMC_hinge"/>
    <property type="match status" value="1"/>
</dbReference>
<dbReference type="SUPFAM" id="SSF52540">
    <property type="entry name" value="P-loop containing nucleoside triphosphate hydrolases"/>
    <property type="match status" value="1"/>
</dbReference>
<dbReference type="SUPFAM" id="SSF75553">
    <property type="entry name" value="Smc hinge domain"/>
    <property type="match status" value="1"/>
</dbReference>
<dbReference type="SUPFAM" id="SSF57997">
    <property type="entry name" value="Tropomyosin"/>
    <property type="match status" value="1"/>
</dbReference>